<evidence type="ECO:0000255" key="1">
    <source>
        <dbReference type="HAMAP-Rule" id="MF_01849"/>
    </source>
</evidence>
<evidence type="ECO:0000255" key="2">
    <source>
        <dbReference type="PROSITE-ProRule" id="PRU01266"/>
    </source>
</evidence>
<protein>
    <recommendedName>
        <fullName evidence="1">Probable dual-specificity RNA methyltransferase RlmN</fullName>
        <ecNumber evidence="1">2.1.1.192</ecNumber>
    </recommendedName>
    <alternativeName>
        <fullName evidence="1">23S rRNA (adenine(2503)-C(2))-methyltransferase</fullName>
    </alternativeName>
    <alternativeName>
        <fullName evidence="1">23S rRNA m2A2503 methyltransferase</fullName>
    </alternativeName>
    <alternativeName>
        <fullName evidence="1">Ribosomal RNA large subunit methyltransferase N</fullName>
    </alternativeName>
    <alternativeName>
        <fullName evidence="1">tRNA (adenine(37)-C(2))-methyltransferase</fullName>
    </alternativeName>
    <alternativeName>
        <fullName evidence="1">tRNA m2A37 methyltransferase</fullName>
    </alternativeName>
</protein>
<proteinExistence type="inferred from homology"/>
<gene>
    <name evidence="1" type="primary">rlmN</name>
    <name type="ordered locus">Fnod_1699</name>
</gene>
<sequence length="348" mass="40479">MRKNILDFSYEELVDEFSKIGLEKFRVDQVWDWIYKKHEFDFDKMTNLSKEHRNTLSERFYIYVPELLDMQISQIDKTTKFLWKLEDDNTIESVLLFHPDRVTACISTQVGCPAKCAFCATGQSGFVRNLSAGEIVSQIIAMEKHRKVNIGNIVYMGMGEPLLNYKEVVKSVKMLNHKKGKNISMRRISISTVGIPEKIVELAQDLPEVKLAISLHAPNNYKRDIIVPMNKKYSVEEIIQSAKEYQKITKNRVTFEYILIREFNDFVDDAEKLAELLKGMGAYVNLIPVNPVPSSGELKFERPHHWAIERFKEVLDKHNIENEIRREKGTDIDAACGQLRRRYITNKK</sequence>
<comment type="function">
    <text evidence="1">Specifically methylates position 2 of adenine 2503 in 23S rRNA and position 2 of adenine 37 in tRNAs.</text>
</comment>
<comment type="catalytic activity">
    <reaction evidence="1">
        <text>adenosine(2503) in 23S rRNA + 2 reduced [2Fe-2S]-[ferredoxin] + 2 S-adenosyl-L-methionine = 2-methyladenosine(2503) in 23S rRNA + 5'-deoxyadenosine + L-methionine + 2 oxidized [2Fe-2S]-[ferredoxin] + S-adenosyl-L-homocysteine</text>
        <dbReference type="Rhea" id="RHEA:42916"/>
        <dbReference type="Rhea" id="RHEA-COMP:10000"/>
        <dbReference type="Rhea" id="RHEA-COMP:10001"/>
        <dbReference type="Rhea" id="RHEA-COMP:10152"/>
        <dbReference type="Rhea" id="RHEA-COMP:10282"/>
        <dbReference type="ChEBI" id="CHEBI:17319"/>
        <dbReference type="ChEBI" id="CHEBI:33737"/>
        <dbReference type="ChEBI" id="CHEBI:33738"/>
        <dbReference type="ChEBI" id="CHEBI:57844"/>
        <dbReference type="ChEBI" id="CHEBI:57856"/>
        <dbReference type="ChEBI" id="CHEBI:59789"/>
        <dbReference type="ChEBI" id="CHEBI:74411"/>
        <dbReference type="ChEBI" id="CHEBI:74497"/>
        <dbReference type="EC" id="2.1.1.192"/>
    </reaction>
</comment>
<comment type="catalytic activity">
    <reaction evidence="1">
        <text>adenosine(37) in tRNA + 2 reduced [2Fe-2S]-[ferredoxin] + 2 S-adenosyl-L-methionine = 2-methyladenosine(37) in tRNA + 5'-deoxyadenosine + L-methionine + 2 oxidized [2Fe-2S]-[ferredoxin] + S-adenosyl-L-homocysteine</text>
        <dbReference type="Rhea" id="RHEA:43332"/>
        <dbReference type="Rhea" id="RHEA-COMP:10000"/>
        <dbReference type="Rhea" id="RHEA-COMP:10001"/>
        <dbReference type="Rhea" id="RHEA-COMP:10162"/>
        <dbReference type="Rhea" id="RHEA-COMP:10485"/>
        <dbReference type="ChEBI" id="CHEBI:17319"/>
        <dbReference type="ChEBI" id="CHEBI:33737"/>
        <dbReference type="ChEBI" id="CHEBI:33738"/>
        <dbReference type="ChEBI" id="CHEBI:57844"/>
        <dbReference type="ChEBI" id="CHEBI:57856"/>
        <dbReference type="ChEBI" id="CHEBI:59789"/>
        <dbReference type="ChEBI" id="CHEBI:74411"/>
        <dbReference type="ChEBI" id="CHEBI:74497"/>
        <dbReference type="EC" id="2.1.1.192"/>
    </reaction>
</comment>
<comment type="cofactor">
    <cofactor evidence="1">
        <name>[4Fe-4S] cluster</name>
        <dbReference type="ChEBI" id="CHEBI:49883"/>
    </cofactor>
    <text evidence="1">Binds 1 [4Fe-4S] cluster. The cluster is coordinated with 3 cysteines and an exchangeable S-adenosyl-L-methionine.</text>
</comment>
<comment type="subcellular location">
    <subcellularLocation>
        <location evidence="1">Cytoplasm</location>
    </subcellularLocation>
</comment>
<comment type="miscellaneous">
    <text evidence="1">Reaction proceeds by a ping-pong mechanism involving intermediate methylation of a conserved cysteine residue.</text>
</comment>
<comment type="similarity">
    <text evidence="1">Belongs to the radical SAM superfamily. RlmN family.</text>
</comment>
<keyword id="KW-0004">4Fe-4S</keyword>
<keyword id="KW-0963">Cytoplasm</keyword>
<keyword id="KW-1015">Disulfide bond</keyword>
<keyword id="KW-0408">Iron</keyword>
<keyword id="KW-0411">Iron-sulfur</keyword>
<keyword id="KW-0479">Metal-binding</keyword>
<keyword id="KW-0489">Methyltransferase</keyword>
<keyword id="KW-1185">Reference proteome</keyword>
<keyword id="KW-0698">rRNA processing</keyword>
<keyword id="KW-0949">S-adenosyl-L-methionine</keyword>
<keyword id="KW-0808">Transferase</keyword>
<keyword id="KW-0819">tRNA processing</keyword>
<name>RLMN_FERNB</name>
<dbReference type="EC" id="2.1.1.192" evidence="1"/>
<dbReference type="EMBL" id="CP000771">
    <property type="protein sequence ID" value="ABS61534.1"/>
    <property type="molecule type" value="Genomic_DNA"/>
</dbReference>
<dbReference type="RefSeq" id="WP_011994825.1">
    <property type="nucleotide sequence ID" value="NC_009718.1"/>
</dbReference>
<dbReference type="SMR" id="A7HNQ1"/>
<dbReference type="STRING" id="381764.Fnod_1699"/>
<dbReference type="KEGG" id="fno:Fnod_1699"/>
<dbReference type="eggNOG" id="COG0820">
    <property type="taxonomic scope" value="Bacteria"/>
</dbReference>
<dbReference type="HOGENOM" id="CLU_029101_2_0_0"/>
<dbReference type="OrthoDB" id="9793973at2"/>
<dbReference type="Proteomes" id="UP000002415">
    <property type="component" value="Chromosome"/>
</dbReference>
<dbReference type="GO" id="GO:0005737">
    <property type="term" value="C:cytoplasm"/>
    <property type="evidence" value="ECO:0007669"/>
    <property type="project" value="UniProtKB-SubCell"/>
</dbReference>
<dbReference type="GO" id="GO:0051539">
    <property type="term" value="F:4 iron, 4 sulfur cluster binding"/>
    <property type="evidence" value="ECO:0007669"/>
    <property type="project" value="UniProtKB-UniRule"/>
</dbReference>
<dbReference type="GO" id="GO:0046872">
    <property type="term" value="F:metal ion binding"/>
    <property type="evidence" value="ECO:0007669"/>
    <property type="project" value="UniProtKB-KW"/>
</dbReference>
<dbReference type="GO" id="GO:0070040">
    <property type="term" value="F:rRNA (adenine(2503)-C2-)-methyltransferase activity"/>
    <property type="evidence" value="ECO:0007669"/>
    <property type="project" value="UniProtKB-UniRule"/>
</dbReference>
<dbReference type="GO" id="GO:0019843">
    <property type="term" value="F:rRNA binding"/>
    <property type="evidence" value="ECO:0007669"/>
    <property type="project" value="UniProtKB-UniRule"/>
</dbReference>
<dbReference type="GO" id="GO:0002935">
    <property type="term" value="F:tRNA (adenine(37)-C2)-methyltransferase activity"/>
    <property type="evidence" value="ECO:0007669"/>
    <property type="project" value="UniProtKB-UniRule"/>
</dbReference>
<dbReference type="GO" id="GO:0000049">
    <property type="term" value="F:tRNA binding"/>
    <property type="evidence" value="ECO:0007669"/>
    <property type="project" value="UniProtKB-UniRule"/>
</dbReference>
<dbReference type="GO" id="GO:0070475">
    <property type="term" value="P:rRNA base methylation"/>
    <property type="evidence" value="ECO:0007669"/>
    <property type="project" value="UniProtKB-UniRule"/>
</dbReference>
<dbReference type="GO" id="GO:0030488">
    <property type="term" value="P:tRNA methylation"/>
    <property type="evidence" value="ECO:0007669"/>
    <property type="project" value="UniProtKB-UniRule"/>
</dbReference>
<dbReference type="CDD" id="cd01335">
    <property type="entry name" value="Radical_SAM"/>
    <property type="match status" value="1"/>
</dbReference>
<dbReference type="FunFam" id="3.20.20.70:FF:000014">
    <property type="entry name" value="Probable dual-specificity RNA methyltransferase RlmN"/>
    <property type="match status" value="1"/>
</dbReference>
<dbReference type="Gene3D" id="1.10.150.530">
    <property type="match status" value="1"/>
</dbReference>
<dbReference type="Gene3D" id="3.20.20.70">
    <property type="entry name" value="Aldolase class I"/>
    <property type="match status" value="1"/>
</dbReference>
<dbReference type="HAMAP" id="MF_01849">
    <property type="entry name" value="RNA_methyltr_RlmN"/>
    <property type="match status" value="1"/>
</dbReference>
<dbReference type="InterPro" id="IPR013785">
    <property type="entry name" value="Aldolase_TIM"/>
</dbReference>
<dbReference type="InterPro" id="IPR006638">
    <property type="entry name" value="Elp3/MiaA/NifB-like_rSAM"/>
</dbReference>
<dbReference type="InterPro" id="IPR040072">
    <property type="entry name" value="Methyltransferase_A"/>
</dbReference>
<dbReference type="InterPro" id="IPR048641">
    <property type="entry name" value="RlmN_N"/>
</dbReference>
<dbReference type="InterPro" id="IPR027492">
    <property type="entry name" value="RNA_MTrfase_RlmN"/>
</dbReference>
<dbReference type="InterPro" id="IPR004383">
    <property type="entry name" value="rRNA_lsu_MTrfase_RlmN/Cfr"/>
</dbReference>
<dbReference type="InterPro" id="IPR007197">
    <property type="entry name" value="rSAM"/>
</dbReference>
<dbReference type="NCBIfam" id="TIGR00048">
    <property type="entry name" value="rRNA_mod_RlmN"/>
    <property type="match status" value="1"/>
</dbReference>
<dbReference type="PANTHER" id="PTHR30544">
    <property type="entry name" value="23S RRNA METHYLTRANSFERASE"/>
    <property type="match status" value="1"/>
</dbReference>
<dbReference type="PANTHER" id="PTHR30544:SF5">
    <property type="entry name" value="RADICAL SAM CORE DOMAIN-CONTAINING PROTEIN"/>
    <property type="match status" value="1"/>
</dbReference>
<dbReference type="Pfam" id="PF04055">
    <property type="entry name" value="Radical_SAM"/>
    <property type="match status" value="1"/>
</dbReference>
<dbReference type="Pfam" id="PF21016">
    <property type="entry name" value="RlmN_N"/>
    <property type="match status" value="1"/>
</dbReference>
<dbReference type="PIRSF" id="PIRSF006004">
    <property type="entry name" value="CHP00048"/>
    <property type="match status" value="1"/>
</dbReference>
<dbReference type="SFLD" id="SFLDF00275">
    <property type="entry name" value="adenosine_C2_methyltransferase"/>
    <property type="match status" value="1"/>
</dbReference>
<dbReference type="SFLD" id="SFLDG01062">
    <property type="entry name" value="methyltransferase_(Class_A)"/>
    <property type="match status" value="1"/>
</dbReference>
<dbReference type="SMART" id="SM00729">
    <property type="entry name" value="Elp3"/>
    <property type="match status" value="1"/>
</dbReference>
<dbReference type="SUPFAM" id="SSF102114">
    <property type="entry name" value="Radical SAM enzymes"/>
    <property type="match status" value="1"/>
</dbReference>
<dbReference type="PROSITE" id="PS51918">
    <property type="entry name" value="RADICAL_SAM"/>
    <property type="match status" value="1"/>
</dbReference>
<accession>A7HNQ1</accession>
<feature type="chain" id="PRO_0000350175" description="Probable dual-specificity RNA methyltransferase RlmN">
    <location>
        <begin position="1"/>
        <end position="348"/>
    </location>
</feature>
<feature type="domain" description="Radical SAM core" evidence="2">
    <location>
        <begin position="98"/>
        <end position="331"/>
    </location>
</feature>
<feature type="active site" description="Proton acceptor" evidence="1">
    <location>
        <position position="92"/>
    </location>
</feature>
<feature type="active site" description="S-methylcysteine intermediate" evidence="1">
    <location>
        <position position="336"/>
    </location>
</feature>
<feature type="binding site" evidence="1">
    <location>
        <position position="112"/>
    </location>
    <ligand>
        <name>[4Fe-4S] cluster</name>
        <dbReference type="ChEBI" id="CHEBI:49883"/>
        <note>4Fe-4S-S-AdoMet</note>
    </ligand>
</feature>
<feature type="binding site" evidence="1">
    <location>
        <position position="116"/>
    </location>
    <ligand>
        <name>[4Fe-4S] cluster</name>
        <dbReference type="ChEBI" id="CHEBI:49883"/>
        <note>4Fe-4S-S-AdoMet</note>
    </ligand>
</feature>
<feature type="binding site" evidence="1">
    <location>
        <position position="119"/>
    </location>
    <ligand>
        <name>[4Fe-4S] cluster</name>
        <dbReference type="ChEBI" id="CHEBI:49883"/>
        <note>4Fe-4S-S-AdoMet</note>
    </ligand>
</feature>
<feature type="binding site" evidence="1">
    <location>
        <begin position="159"/>
        <end position="160"/>
    </location>
    <ligand>
        <name>S-adenosyl-L-methionine</name>
        <dbReference type="ChEBI" id="CHEBI:59789"/>
    </ligand>
</feature>
<feature type="binding site" evidence="1">
    <location>
        <position position="191"/>
    </location>
    <ligand>
        <name>S-adenosyl-L-methionine</name>
        <dbReference type="ChEBI" id="CHEBI:59789"/>
    </ligand>
</feature>
<feature type="binding site" evidence="1">
    <location>
        <begin position="214"/>
        <end position="216"/>
    </location>
    <ligand>
        <name>S-adenosyl-L-methionine</name>
        <dbReference type="ChEBI" id="CHEBI:59789"/>
    </ligand>
</feature>
<feature type="binding site" evidence="1">
    <location>
        <position position="290"/>
    </location>
    <ligand>
        <name>S-adenosyl-L-methionine</name>
        <dbReference type="ChEBI" id="CHEBI:59789"/>
    </ligand>
</feature>
<feature type="disulfide bond" description="(transient)" evidence="1">
    <location>
        <begin position="105"/>
        <end position="336"/>
    </location>
</feature>
<reference key="1">
    <citation type="submission" date="2007-07" db="EMBL/GenBank/DDBJ databases">
        <title>Complete sequence of Fervidobacterium nodosum Rt17-B1.</title>
        <authorList>
            <consortium name="US DOE Joint Genome Institute"/>
            <person name="Copeland A."/>
            <person name="Lucas S."/>
            <person name="Lapidus A."/>
            <person name="Barry K."/>
            <person name="Glavina del Rio T."/>
            <person name="Dalin E."/>
            <person name="Tice H."/>
            <person name="Pitluck S."/>
            <person name="Saunders E."/>
            <person name="Brettin T."/>
            <person name="Bruce D."/>
            <person name="Detter J.C."/>
            <person name="Han C."/>
            <person name="Schmutz J."/>
            <person name="Larimer F."/>
            <person name="Land M."/>
            <person name="Hauser L."/>
            <person name="Kyrpides N."/>
            <person name="Mikhailova N."/>
            <person name="Nelson K."/>
            <person name="Gogarten J.P."/>
            <person name="Noll K."/>
            <person name="Richardson P."/>
        </authorList>
    </citation>
    <scope>NUCLEOTIDE SEQUENCE [LARGE SCALE GENOMIC DNA]</scope>
    <source>
        <strain>ATCC 35602 / DSM 5306 / Rt17-B1</strain>
    </source>
</reference>
<organism>
    <name type="scientific">Fervidobacterium nodosum (strain ATCC 35602 / DSM 5306 / Rt17-B1)</name>
    <dbReference type="NCBI Taxonomy" id="381764"/>
    <lineage>
        <taxon>Bacteria</taxon>
        <taxon>Thermotogati</taxon>
        <taxon>Thermotogota</taxon>
        <taxon>Thermotogae</taxon>
        <taxon>Thermotogales</taxon>
        <taxon>Fervidobacteriaceae</taxon>
        <taxon>Fervidobacterium</taxon>
    </lineage>
</organism>